<protein>
    <recommendedName>
        <fullName evidence="1">S-adenosylmethionine synthase</fullName>
        <shortName evidence="1">AdoMet synthase</shortName>
        <ecNumber evidence="1">2.5.1.6</ecNumber>
    </recommendedName>
    <alternativeName>
        <fullName evidence="1">MAT</fullName>
    </alternativeName>
    <alternativeName>
        <fullName evidence="1">Methionine adenosyltransferase</fullName>
    </alternativeName>
</protein>
<proteinExistence type="inferred from homology"/>
<gene>
    <name evidence="1" type="primary">metK</name>
    <name type="ordered locus">PFL_5788</name>
</gene>
<organism>
    <name type="scientific">Pseudomonas fluorescens (strain ATCC BAA-477 / NRRL B-23932 / Pf-5)</name>
    <dbReference type="NCBI Taxonomy" id="220664"/>
    <lineage>
        <taxon>Bacteria</taxon>
        <taxon>Pseudomonadati</taxon>
        <taxon>Pseudomonadota</taxon>
        <taxon>Gammaproteobacteria</taxon>
        <taxon>Pseudomonadales</taxon>
        <taxon>Pseudomonadaceae</taxon>
        <taxon>Pseudomonas</taxon>
    </lineage>
</organism>
<dbReference type="EC" id="2.5.1.6" evidence="1"/>
<dbReference type="EMBL" id="CP000076">
    <property type="protein sequence ID" value="AAY94978.1"/>
    <property type="molecule type" value="Genomic_DNA"/>
</dbReference>
<dbReference type="RefSeq" id="WP_011063962.1">
    <property type="nucleotide sequence ID" value="NC_004129.6"/>
</dbReference>
<dbReference type="SMR" id="Q4K4I7"/>
<dbReference type="STRING" id="220664.PFL_5788"/>
<dbReference type="KEGG" id="pfl:PFL_5788"/>
<dbReference type="PATRIC" id="fig|220664.5.peg.5901"/>
<dbReference type="eggNOG" id="COG0192">
    <property type="taxonomic scope" value="Bacteria"/>
</dbReference>
<dbReference type="HOGENOM" id="CLU_041802_1_1_6"/>
<dbReference type="UniPathway" id="UPA00315">
    <property type="reaction ID" value="UER00080"/>
</dbReference>
<dbReference type="Proteomes" id="UP000008540">
    <property type="component" value="Chromosome"/>
</dbReference>
<dbReference type="GO" id="GO:0005737">
    <property type="term" value="C:cytoplasm"/>
    <property type="evidence" value="ECO:0007669"/>
    <property type="project" value="UniProtKB-SubCell"/>
</dbReference>
<dbReference type="GO" id="GO:0005524">
    <property type="term" value="F:ATP binding"/>
    <property type="evidence" value="ECO:0007669"/>
    <property type="project" value="UniProtKB-UniRule"/>
</dbReference>
<dbReference type="GO" id="GO:0000287">
    <property type="term" value="F:magnesium ion binding"/>
    <property type="evidence" value="ECO:0007669"/>
    <property type="project" value="UniProtKB-UniRule"/>
</dbReference>
<dbReference type="GO" id="GO:0004478">
    <property type="term" value="F:methionine adenosyltransferase activity"/>
    <property type="evidence" value="ECO:0007669"/>
    <property type="project" value="UniProtKB-UniRule"/>
</dbReference>
<dbReference type="GO" id="GO:0006730">
    <property type="term" value="P:one-carbon metabolic process"/>
    <property type="evidence" value="ECO:0007669"/>
    <property type="project" value="UniProtKB-KW"/>
</dbReference>
<dbReference type="GO" id="GO:0006556">
    <property type="term" value="P:S-adenosylmethionine biosynthetic process"/>
    <property type="evidence" value="ECO:0007669"/>
    <property type="project" value="UniProtKB-UniRule"/>
</dbReference>
<dbReference type="CDD" id="cd18079">
    <property type="entry name" value="S-AdoMet_synt"/>
    <property type="match status" value="1"/>
</dbReference>
<dbReference type="FunFam" id="3.30.300.10:FF:000003">
    <property type="entry name" value="S-adenosylmethionine synthase"/>
    <property type="match status" value="1"/>
</dbReference>
<dbReference type="Gene3D" id="3.30.300.10">
    <property type="match status" value="3"/>
</dbReference>
<dbReference type="HAMAP" id="MF_00086">
    <property type="entry name" value="S_AdoMet_synth1"/>
    <property type="match status" value="1"/>
</dbReference>
<dbReference type="InterPro" id="IPR022631">
    <property type="entry name" value="ADOMET_SYNTHASE_CS"/>
</dbReference>
<dbReference type="InterPro" id="IPR022630">
    <property type="entry name" value="S-AdoMet_synt_C"/>
</dbReference>
<dbReference type="InterPro" id="IPR022629">
    <property type="entry name" value="S-AdoMet_synt_central"/>
</dbReference>
<dbReference type="InterPro" id="IPR022628">
    <property type="entry name" value="S-AdoMet_synt_N"/>
</dbReference>
<dbReference type="InterPro" id="IPR002133">
    <property type="entry name" value="S-AdoMet_synthetase"/>
</dbReference>
<dbReference type="InterPro" id="IPR022636">
    <property type="entry name" value="S-AdoMet_synthetase_sfam"/>
</dbReference>
<dbReference type="NCBIfam" id="TIGR01034">
    <property type="entry name" value="metK"/>
    <property type="match status" value="1"/>
</dbReference>
<dbReference type="PANTHER" id="PTHR11964">
    <property type="entry name" value="S-ADENOSYLMETHIONINE SYNTHETASE"/>
    <property type="match status" value="1"/>
</dbReference>
<dbReference type="Pfam" id="PF02773">
    <property type="entry name" value="S-AdoMet_synt_C"/>
    <property type="match status" value="1"/>
</dbReference>
<dbReference type="Pfam" id="PF02772">
    <property type="entry name" value="S-AdoMet_synt_M"/>
    <property type="match status" value="1"/>
</dbReference>
<dbReference type="Pfam" id="PF00438">
    <property type="entry name" value="S-AdoMet_synt_N"/>
    <property type="match status" value="1"/>
</dbReference>
<dbReference type="PIRSF" id="PIRSF000497">
    <property type="entry name" value="MAT"/>
    <property type="match status" value="1"/>
</dbReference>
<dbReference type="SUPFAM" id="SSF55973">
    <property type="entry name" value="S-adenosylmethionine synthetase"/>
    <property type="match status" value="3"/>
</dbReference>
<dbReference type="PROSITE" id="PS00376">
    <property type="entry name" value="ADOMET_SYNTHASE_1"/>
    <property type="match status" value="1"/>
</dbReference>
<dbReference type="PROSITE" id="PS00377">
    <property type="entry name" value="ADOMET_SYNTHASE_2"/>
    <property type="match status" value="1"/>
</dbReference>
<sequence length="396" mass="42529">MSEYSLFTSESVSEGHPDKIADQISDAVLDAIIAQDKHARVAVETLVKTGVAIVAGEVTTSAWVDLEQIVRDVICDIGYTSSDVGFDGATCGVMNIIGKQSPDINQGVDRAKPEDQGAGDQGLMFGYASNETEVLMPAPITFSHQLVQRQAEARKSGLLPWLRPDAKSQVTCRYEGGKVVGIDAVVLSTQHNPEVSYSDLREGVMELIVKHVLPAELLSKDTQFHINPTGQFIIGGPVGDCGLTGRKIIVDSYGGMARHGGGAFSGKDPSKVDRSAAYAGRYVAKNIVAAGLAERCEIQVSYAIGVAQPTSISLNTFGTGKISDDKIIKLVREVFDLRPYAITTMLDLLHPMYQETAAYGHFGRAPQTKTVGDDTFTTFTWEKTDRADTLRAAAGL</sequence>
<reference key="1">
    <citation type="journal article" date="2005" name="Nat. Biotechnol.">
        <title>Complete genome sequence of the plant commensal Pseudomonas fluorescens Pf-5.</title>
        <authorList>
            <person name="Paulsen I.T."/>
            <person name="Press C.M."/>
            <person name="Ravel J."/>
            <person name="Kobayashi D.Y."/>
            <person name="Myers G.S.A."/>
            <person name="Mavrodi D.V."/>
            <person name="DeBoy R.T."/>
            <person name="Seshadri R."/>
            <person name="Ren Q."/>
            <person name="Madupu R."/>
            <person name="Dodson R.J."/>
            <person name="Durkin A.S."/>
            <person name="Brinkac L.M."/>
            <person name="Daugherty S.C."/>
            <person name="Sullivan S.A."/>
            <person name="Rosovitz M.J."/>
            <person name="Gwinn M.L."/>
            <person name="Zhou L."/>
            <person name="Schneider D.J."/>
            <person name="Cartinhour S.W."/>
            <person name="Nelson W.C."/>
            <person name="Weidman J."/>
            <person name="Watkins K."/>
            <person name="Tran K."/>
            <person name="Khouri H."/>
            <person name="Pierson E.A."/>
            <person name="Pierson L.S. III"/>
            <person name="Thomashow L.S."/>
            <person name="Loper J.E."/>
        </authorList>
    </citation>
    <scope>NUCLEOTIDE SEQUENCE [LARGE SCALE GENOMIC DNA]</scope>
    <source>
        <strain>ATCC BAA-477 / NRRL B-23932 / Pf-5</strain>
    </source>
</reference>
<evidence type="ECO:0000255" key="1">
    <source>
        <dbReference type="HAMAP-Rule" id="MF_00086"/>
    </source>
</evidence>
<accession>Q4K4I7</accession>
<name>METK_PSEF5</name>
<comment type="function">
    <text evidence="1">Catalyzes the formation of S-adenosylmethionine (AdoMet) from methionine and ATP. The overall synthetic reaction is composed of two sequential steps, AdoMet formation and the subsequent tripolyphosphate hydrolysis which occurs prior to release of AdoMet from the enzyme.</text>
</comment>
<comment type="catalytic activity">
    <reaction evidence="1">
        <text>L-methionine + ATP + H2O = S-adenosyl-L-methionine + phosphate + diphosphate</text>
        <dbReference type="Rhea" id="RHEA:21080"/>
        <dbReference type="ChEBI" id="CHEBI:15377"/>
        <dbReference type="ChEBI" id="CHEBI:30616"/>
        <dbReference type="ChEBI" id="CHEBI:33019"/>
        <dbReference type="ChEBI" id="CHEBI:43474"/>
        <dbReference type="ChEBI" id="CHEBI:57844"/>
        <dbReference type="ChEBI" id="CHEBI:59789"/>
        <dbReference type="EC" id="2.5.1.6"/>
    </reaction>
</comment>
<comment type="cofactor">
    <cofactor evidence="1">
        <name>Mg(2+)</name>
        <dbReference type="ChEBI" id="CHEBI:18420"/>
    </cofactor>
    <text evidence="1">Binds 2 divalent ions per subunit.</text>
</comment>
<comment type="cofactor">
    <cofactor evidence="1">
        <name>K(+)</name>
        <dbReference type="ChEBI" id="CHEBI:29103"/>
    </cofactor>
    <text evidence="1">Binds 1 potassium ion per subunit.</text>
</comment>
<comment type="pathway">
    <text evidence="1">Amino-acid biosynthesis; S-adenosyl-L-methionine biosynthesis; S-adenosyl-L-methionine from L-methionine: step 1/1.</text>
</comment>
<comment type="subunit">
    <text evidence="1">Homotetramer; dimer of dimers.</text>
</comment>
<comment type="subcellular location">
    <subcellularLocation>
        <location evidence="1">Cytoplasm</location>
    </subcellularLocation>
</comment>
<comment type="similarity">
    <text evidence="1">Belongs to the AdoMet synthase family.</text>
</comment>
<keyword id="KW-0067">ATP-binding</keyword>
<keyword id="KW-0963">Cytoplasm</keyword>
<keyword id="KW-0460">Magnesium</keyword>
<keyword id="KW-0479">Metal-binding</keyword>
<keyword id="KW-0547">Nucleotide-binding</keyword>
<keyword id="KW-0554">One-carbon metabolism</keyword>
<keyword id="KW-0630">Potassium</keyword>
<keyword id="KW-0808">Transferase</keyword>
<feature type="chain" id="PRO_0000241018" description="S-adenosylmethionine synthase">
    <location>
        <begin position="1"/>
        <end position="396"/>
    </location>
</feature>
<feature type="region of interest" description="Flexible loop" evidence="1">
    <location>
        <begin position="100"/>
        <end position="110"/>
    </location>
</feature>
<feature type="binding site" description="in other chain" evidence="1">
    <location>
        <position position="16"/>
    </location>
    <ligand>
        <name>ATP</name>
        <dbReference type="ChEBI" id="CHEBI:30616"/>
        <note>ligand shared between two neighboring subunits</note>
    </ligand>
</feature>
<feature type="binding site" evidence="1">
    <location>
        <position position="18"/>
    </location>
    <ligand>
        <name>Mg(2+)</name>
        <dbReference type="ChEBI" id="CHEBI:18420"/>
    </ligand>
</feature>
<feature type="binding site" evidence="1">
    <location>
        <position position="44"/>
    </location>
    <ligand>
        <name>K(+)</name>
        <dbReference type="ChEBI" id="CHEBI:29103"/>
    </ligand>
</feature>
<feature type="binding site" description="in other chain" evidence="1">
    <location>
        <position position="57"/>
    </location>
    <ligand>
        <name>L-methionine</name>
        <dbReference type="ChEBI" id="CHEBI:57844"/>
        <note>ligand shared between two neighboring subunits</note>
    </ligand>
</feature>
<feature type="binding site" description="in other chain" evidence="1">
    <location>
        <position position="100"/>
    </location>
    <ligand>
        <name>L-methionine</name>
        <dbReference type="ChEBI" id="CHEBI:57844"/>
        <note>ligand shared between two neighboring subunits</note>
    </ligand>
</feature>
<feature type="binding site" description="in other chain" evidence="1">
    <location>
        <begin position="165"/>
        <end position="167"/>
    </location>
    <ligand>
        <name>ATP</name>
        <dbReference type="ChEBI" id="CHEBI:30616"/>
        <note>ligand shared between two neighboring subunits</note>
    </ligand>
</feature>
<feature type="binding site" evidence="1">
    <location>
        <position position="240"/>
    </location>
    <ligand>
        <name>ATP</name>
        <dbReference type="ChEBI" id="CHEBI:30616"/>
        <note>ligand shared between two neighboring subunits</note>
    </ligand>
</feature>
<feature type="binding site" evidence="1">
    <location>
        <position position="240"/>
    </location>
    <ligand>
        <name>L-methionine</name>
        <dbReference type="ChEBI" id="CHEBI:57844"/>
        <note>ligand shared between two neighboring subunits</note>
    </ligand>
</feature>
<feature type="binding site" description="in other chain" evidence="1">
    <location>
        <begin position="246"/>
        <end position="247"/>
    </location>
    <ligand>
        <name>ATP</name>
        <dbReference type="ChEBI" id="CHEBI:30616"/>
        <note>ligand shared between two neighboring subunits</note>
    </ligand>
</feature>
<feature type="binding site" evidence="1">
    <location>
        <position position="263"/>
    </location>
    <ligand>
        <name>ATP</name>
        <dbReference type="ChEBI" id="CHEBI:30616"/>
        <note>ligand shared between two neighboring subunits</note>
    </ligand>
</feature>
<feature type="binding site" evidence="1">
    <location>
        <position position="267"/>
    </location>
    <ligand>
        <name>ATP</name>
        <dbReference type="ChEBI" id="CHEBI:30616"/>
        <note>ligand shared between two neighboring subunits</note>
    </ligand>
</feature>
<feature type="binding site" description="in other chain" evidence="1">
    <location>
        <position position="271"/>
    </location>
    <ligand>
        <name>L-methionine</name>
        <dbReference type="ChEBI" id="CHEBI:57844"/>
        <note>ligand shared between two neighboring subunits</note>
    </ligand>
</feature>